<dbReference type="EMBL" id="CP000025">
    <property type="protein sequence ID" value="AAW36190.1"/>
    <property type="molecule type" value="Genomic_DNA"/>
</dbReference>
<dbReference type="RefSeq" id="WP_002858938.1">
    <property type="nucleotide sequence ID" value="NC_003912.7"/>
</dbReference>
<dbReference type="SMR" id="Q5HSJ7"/>
<dbReference type="KEGG" id="cjr:CJE1766"/>
<dbReference type="HOGENOM" id="CLU_092403_0_2_7"/>
<dbReference type="GO" id="GO:0015935">
    <property type="term" value="C:small ribosomal subunit"/>
    <property type="evidence" value="ECO:0007669"/>
    <property type="project" value="InterPro"/>
</dbReference>
<dbReference type="GO" id="GO:0019843">
    <property type="term" value="F:rRNA binding"/>
    <property type="evidence" value="ECO:0007669"/>
    <property type="project" value="UniProtKB-UniRule"/>
</dbReference>
<dbReference type="GO" id="GO:0003735">
    <property type="term" value="F:structural constituent of ribosome"/>
    <property type="evidence" value="ECO:0007669"/>
    <property type="project" value="InterPro"/>
</dbReference>
<dbReference type="GO" id="GO:0042274">
    <property type="term" value="P:ribosomal small subunit biogenesis"/>
    <property type="evidence" value="ECO:0007669"/>
    <property type="project" value="TreeGrafter"/>
</dbReference>
<dbReference type="GO" id="GO:0006412">
    <property type="term" value="P:translation"/>
    <property type="evidence" value="ECO:0007669"/>
    <property type="project" value="UniProtKB-UniRule"/>
</dbReference>
<dbReference type="CDD" id="cd00165">
    <property type="entry name" value="S4"/>
    <property type="match status" value="1"/>
</dbReference>
<dbReference type="FunFam" id="1.10.1050.10:FF:000001">
    <property type="entry name" value="30S ribosomal protein S4"/>
    <property type="match status" value="1"/>
</dbReference>
<dbReference type="FunFam" id="3.10.290.10:FF:000001">
    <property type="entry name" value="30S ribosomal protein S4"/>
    <property type="match status" value="1"/>
</dbReference>
<dbReference type="Gene3D" id="1.10.1050.10">
    <property type="entry name" value="Ribosomal Protein S4 Delta 41, Chain A, domain 1"/>
    <property type="match status" value="1"/>
</dbReference>
<dbReference type="Gene3D" id="3.10.290.10">
    <property type="entry name" value="RNA-binding S4 domain"/>
    <property type="match status" value="1"/>
</dbReference>
<dbReference type="HAMAP" id="MF_01306_B">
    <property type="entry name" value="Ribosomal_uS4_B"/>
    <property type="match status" value="1"/>
</dbReference>
<dbReference type="InterPro" id="IPR022801">
    <property type="entry name" value="Ribosomal_uS4"/>
</dbReference>
<dbReference type="InterPro" id="IPR005709">
    <property type="entry name" value="Ribosomal_uS4_bac-type"/>
</dbReference>
<dbReference type="InterPro" id="IPR018079">
    <property type="entry name" value="Ribosomal_uS4_CS"/>
</dbReference>
<dbReference type="InterPro" id="IPR001912">
    <property type="entry name" value="Ribosomal_uS4_N"/>
</dbReference>
<dbReference type="InterPro" id="IPR002942">
    <property type="entry name" value="S4_RNA-bd"/>
</dbReference>
<dbReference type="InterPro" id="IPR036986">
    <property type="entry name" value="S4_RNA-bd_sf"/>
</dbReference>
<dbReference type="NCBIfam" id="NF003717">
    <property type="entry name" value="PRK05327.1"/>
    <property type="match status" value="1"/>
</dbReference>
<dbReference type="NCBIfam" id="TIGR01017">
    <property type="entry name" value="rpsD_bact"/>
    <property type="match status" value="1"/>
</dbReference>
<dbReference type="PANTHER" id="PTHR11831">
    <property type="entry name" value="30S 40S RIBOSOMAL PROTEIN"/>
    <property type="match status" value="1"/>
</dbReference>
<dbReference type="PANTHER" id="PTHR11831:SF4">
    <property type="entry name" value="SMALL RIBOSOMAL SUBUNIT PROTEIN US4M"/>
    <property type="match status" value="1"/>
</dbReference>
<dbReference type="Pfam" id="PF00163">
    <property type="entry name" value="Ribosomal_S4"/>
    <property type="match status" value="1"/>
</dbReference>
<dbReference type="Pfam" id="PF01479">
    <property type="entry name" value="S4"/>
    <property type="match status" value="1"/>
</dbReference>
<dbReference type="SMART" id="SM01390">
    <property type="entry name" value="Ribosomal_S4"/>
    <property type="match status" value="1"/>
</dbReference>
<dbReference type="SMART" id="SM00363">
    <property type="entry name" value="S4"/>
    <property type="match status" value="1"/>
</dbReference>
<dbReference type="SUPFAM" id="SSF55174">
    <property type="entry name" value="Alpha-L RNA-binding motif"/>
    <property type="match status" value="1"/>
</dbReference>
<dbReference type="PROSITE" id="PS00632">
    <property type="entry name" value="RIBOSOMAL_S4"/>
    <property type="match status" value="1"/>
</dbReference>
<dbReference type="PROSITE" id="PS50889">
    <property type="entry name" value="S4"/>
    <property type="match status" value="1"/>
</dbReference>
<protein>
    <recommendedName>
        <fullName evidence="1">Small ribosomal subunit protein uS4</fullName>
    </recommendedName>
    <alternativeName>
        <fullName evidence="2">30S ribosomal protein S4</fullName>
    </alternativeName>
</protein>
<accession>Q5HSJ7</accession>
<reference key="1">
    <citation type="journal article" date="2005" name="PLoS Biol.">
        <title>Major structural differences and novel potential virulence mechanisms from the genomes of multiple Campylobacter species.</title>
        <authorList>
            <person name="Fouts D.E."/>
            <person name="Mongodin E.F."/>
            <person name="Mandrell R.E."/>
            <person name="Miller W.G."/>
            <person name="Rasko D.A."/>
            <person name="Ravel J."/>
            <person name="Brinkac L.M."/>
            <person name="DeBoy R.T."/>
            <person name="Parker C.T."/>
            <person name="Daugherty S.C."/>
            <person name="Dodson R.J."/>
            <person name="Durkin A.S."/>
            <person name="Madupu R."/>
            <person name="Sullivan S.A."/>
            <person name="Shetty J.U."/>
            <person name="Ayodeji M.A."/>
            <person name="Shvartsbeyn A."/>
            <person name="Schatz M.C."/>
            <person name="Badger J.H."/>
            <person name="Fraser C.M."/>
            <person name="Nelson K.E."/>
        </authorList>
    </citation>
    <scope>NUCLEOTIDE SEQUENCE [LARGE SCALE GENOMIC DNA]</scope>
    <source>
        <strain>RM1221</strain>
    </source>
</reference>
<feature type="chain" id="PRO_0000228883" description="Small ribosomal subunit protein uS4">
    <location>
        <begin position="1"/>
        <end position="208"/>
    </location>
</feature>
<feature type="domain" description="S4 RNA-binding" evidence="1">
    <location>
        <begin position="98"/>
        <end position="163"/>
    </location>
</feature>
<keyword id="KW-0687">Ribonucleoprotein</keyword>
<keyword id="KW-0689">Ribosomal protein</keyword>
<keyword id="KW-0694">RNA-binding</keyword>
<keyword id="KW-0699">rRNA-binding</keyword>
<evidence type="ECO:0000255" key="1">
    <source>
        <dbReference type="HAMAP-Rule" id="MF_01306"/>
    </source>
</evidence>
<evidence type="ECO:0000305" key="2"/>
<organism>
    <name type="scientific">Campylobacter jejuni (strain RM1221)</name>
    <dbReference type="NCBI Taxonomy" id="195099"/>
    <lineage>
        <taxon>Bacteria</taxon>
        <taxon>Pseudomonadati</taxon>
        <taxon>Campylobacterota</taxon>
        <taxon>Epsilonproteobacteria</taxon>
        <taxon>Campylobacterales</taxon>
        <taxon>Campylobacteraceae</taxon>
        <taxon>Campylobacter</taxon>
    </lineage>
</organism>
<proteinExistence type="inferred from homology"/>
<name>RS4_CAMJR</name>
<gene>
    <name evidence="1" type="primary">rpsD</name>
    <name type="ordered locus">CJE1766</name>
</gene>
<sequence length="208" mass="23910">MARYRGPVEKLERRFGVSLALKGERRLAGKSALDKRPYAPGQHGARKGKISEYGLQLREKQKAKFMYGVSEKQFRRLFAEAARREGNTGVLLIQLLEQRLDNVVYRMGFATTRRFARQLVTHGHILVNGKRVDIPSFRVEAGAKIEIIEKSKNNPQITRAIELTAQTGIVAWVDVEKDKRFGIFTRKPEREEVVIPVEERFIVELYSK</sequence>
<comment type="function">
    <text evidence="1">One of the primary rRNA binding proteins, it binds directly to 16S rRNA where it nucleates assembly of the body of the 30S subunit.</text>
</comment>
<comment type="function">
    <text evidence="1">With S5 and S12 plays an important role in translational accuracy.</text>
</comment>
<comment type="subunit">
    <text evidence="1">Part of the 30S ribosomal subunit. Contacts protein S5. The interaction surface between S4 and S5 is involved in control of translational fidelity.</text>
</comment>
<comment type="similarity">
    <text evidence="1">Belongs to the universal ribosomal protein uS4 family.</text>
</comment>